<gene>
    <name evidence="1" type="primary">lepA</name>
    <name type="ordered locus">Sbal_1199</name>
</gene>
<feature type="chain" id="PRO_1000032050" description="Elongation factor 4">
    <location>
        <begin position="1"/>
        <end position="596"/>
    </location>
</feature>
<feature type="domain" description="tr-type G">
    <location>
        <begin position="2"/>
        <end position="184"/>
    </location>
</feature>
<feature type="binding site" evidence="1">
    <location>
        <begin position="14"/>
        <end position="19"/>
    </location>
    <ligand>
        <name>GTP</name>
        <dbReference type="ChEBI" id="CHEBI:37565"/>
    </ligand>
</feature>
<feature type="binding site" evidence="1">
    <location>
        <begin position="131"/>
        <end position="134"/>
    </location>
    <ligand>
        <name>GTP</name>
        <dbReference type="ChEBI" id="CHEBI:37565"/>
    </ligand>
</feature>
<keyword id="KW-0997">Cell inner membrane</keyword>
<keyword id="KW-1003">Cell membrane</keyword>
<keyword id="KW-0342">GTP-binding</keyword>
<keyword id="KW-0378">Hydrolase</keyword>
<keyword id="KW-0472">Membrane</keyword>
<keyword id="KW-0547">Nucleotide-binding</keyword>
<keyword id="KW-0648">Protein biosynthesis</keyword>
<keyword id="KW-1185">Reference proteome</keyword>
<sequence>MKQIRNFSIIAHIDHGKSTLSDRLIQVCGGLTDREMDAQVLDSMDLERERGITIKAQSVTLDYKAKDGLVYQLNFIDTPGHVDFSYEVSRSLAACEGALLVVDAGQGVEAQTLANCYTALDMNLDVVPILNKIDLPQADPERVAAEIEDIVGIDAMDAVRCSAKTGVGVDEVLEVIVAKIPPPEGDPNAPLQALIIDSWFDNYLGVVSLVRIKHGSLKKGDKFKVMSTGQNHTADRVGIFTPKQTDKTELKTGEVGFVIAGLKEIHGAPVGDTLTLAKNGAEKPLPGFKKVKPQVYAGVFPISTDEYENFRDALNKLSLNDASLFFEPESSSALGFGFRIGYLGLLHMEIVQERLEREYNLELITTAPTVVYEVVMTSGETIYVDNPSDLPAINNIEEMREPIVEANILVPKEYLGNVITLCIEKRGTQVNMVYHGNQVAVTYHLPMAEVVMDFFDRLKSTSRGYASLEYNFIRFDPADMVRLDILINGDRVDALAMVIHRSNIRHRGLALVDKMKELIPRQMFDIAIQAAVGSQIIARSTVKALRKDVTAKCYGGDVSRKKKLLNKQKEGKKRMKQVGNVEVPQEAFLAVLKLNE</sequence>
<dbReference type="EC" id="3.6.5.n1" evidence="1"/>
<dbReference type="EMBL" id="CP000563">
    <property type="protein sequence ID" value="ABN60717.1"/>
    <property type="molecule type" value="Genomic_DNA"/>
</dbReference>
<dbReference type="RefSeq" id="WP_006080777.1">
    <property type="nucleotide sequence ID" value="NC_009052.1"/>
</dbReference>
<dbReference type="SMR" id="A3D1V4"/>
<dbReference type="STRING" id="325240.Sbal_1199"/>
<dbReference type="KEGG" id="sbl:Sbal_1199"/>
<dbReference type="HOGENOM" id="CLU_009995_3_3_6"/>
<dbReference type="OrthoDB" id="9804431at2"/>
<dbReference type="Proteomes" id="UP000001557">
    <property type="component" value="Chromosome"/>
</dbReference>
<dbReference type="GO" id="GO:0005886">
    <property type="term" value="C:plasma membrane"/>
    <property type="evidence" value="ECO:0007669"/>
    <property type="project" value="UniProtKB-SubCell"/>
</dbReference>
<dbReference type="GO" id="GO:0005525">
    <property type="term" value="F:GTP binding"/>
    <property type="evidence" value="ECO:0007669"/>
    <property type="project" value="UniProtKB-UniRule"/>
</dbReference>
<dbReference type="GO" id="GO:0003924">
    <property type="term" value="F:GTPase activity"/>
    <property type="evidence" value="ECO:0007669"/>
    <property type="project" value="UniProtKB-UniRule"/>
</dbReference>
<dbReference type="GO" id="GO:0097216">
    <property type="term" value="F:guanosine tetraphosphate binding"/>
    <property type="evidence" value="ECO:0007669"/>
    <property type="project" value="UniProtKB-ARBA"/>
</dbReference>
<dbReference type="GO" id="GO:0043022">
    <property type="term" value="F:ribosome binding"/>
    <property type="evidence" value="ECO:0007669"/>
    <property type="project" value="UniProtKB-UniRule"/>
</dbReference>
<dbReference type="GO" id="GO:0003746">
    <property type="term" value="F:translation elongation factor activity"/>
    <property type="evidence" value="ECO:0007669"/>
    <property type="project" value="UniProtKB-UniRule"/>
</dbReference>
<dbReference type="GO" id="GO:0045727">
    <property type="term" value="P:positive regulation of translation"/>
    <property type="evidence" value="ECO:0007669"/>
    <property type="project" value="UniProtKB-UniRule"/>
</dbReference>
<dbReference type="CDD" id="cd03699">
    <property type="entry name" value="EF4_II"/>
    <property type="match status" value="1"/>
</dbReference>
<dbReference type="CDD" id="cd16260">
    <property type="entry name" value="EF4_III"/>
    <property type="match status" value="1"/>
</dbReference>
<dbReference type="CDD" id="cd01890">
    <property type="entry name" value="LepA"/>
    <property type="match status" value="1"/>
</dbReference>
<dbReference type="CDD" id="cd03709">
    <property type="entry name" value="lepA_C"/>
    <property type="match status" value="1"/>
</dbReference>
<dbReference type="FunFam" id="3.40.50.300:FF:000078">
    <property type="entry name" value="Elongation factor 4"/>
    <property type="match status" value="1"/>
</dbReference>
<dbReference type="FunFam" id="2.40.30.10:FF:000015">
    <property type="entry name" value="Translation factor GUF1, mitochondrial"/>
    <property type="match status" value="1"/>
</dbReference>
<dbReference type="FunFam" id="3.30.70.240:FF:000007">
    <property type="entry name" value="Translation factor GUF1, mitochondrial"/>
    <property type="match status" value="1"/>
</dbReference>
<dbReference type="FunFam" id="3.30.70.2570:FF:000001">
    <property type="entry name" value="Translation factor GUF1, mitochondrial"/>
    <property type="match status" value="1"/>
</dbReference>
<dbReference type="FunFam" id="3.30.70.870:FF:000004">
    <property type="entry name" value="Translation factor GUF1, mitochondrial"/>
    <property type="match status" value="1"/>
</dbReference>
<dbReference type="Gene3D" id="3.30.70.240">
    <property type="match status" value="1"/>
</dbReference>
<dbReference type="Gene3D" id="3.30.70.2570">
    <property type="entry name" value="Elongation factor 4, C-terminal domain"/>
    <property type="match status" value="1"/>
</dbReference>
<dbReference type="Gene3D" id="3.30.70.870">
    <property type="entry name" value="Elongation Factor G (Translational Gtpase), domain 3"/>
    <property type="match status" value="1"/>
</dbReference>
<dbReference type="Gene3D" id="3.40.50.300">
    <property type="entry name" value="P-loop containing nucleotide triphosphate hydrolases"/>
    <property type="match status" value="1"/>
</dbReference>
<dbReference type="Gene3D" id="2.40.30.10">
    <property type="entry name" value="Translation factors"/>
    <property type="match status" value="1"/>
</dbReference>
<dbReference type="HAMAP" id="MF_00071">
    <property type="entry name" value="LepA"/>
    <property type="match status" value="1"/>
</dbReference>
<dbReference type="InterPro" id="IPR006297">
    <property type="entry name" value="EF-4"/>
</dbReference>
<dbReference type="InterPro" id="IPR035647">
    <property type="entry name" value="EFG_III/V"/>
</dbReference>
<dbReference type="InterPro" id="IPR000640">
    <property type="entry name" value="EFG_V-like"/>
</dbReference>
<dbReference type="InterPro" id="IPR004161">
    <property type="entry name" value="EFTu-like_2"/>
</dbReference>
<dbReference type="InterPro" id="IPR031157">
    <property type="entry name" value="G_TR_CS"/>
</dbReference>
<dbReference type="InterPro" id="IPR038363">
    <property type="entry name" value="LepA_C_sf"/>
</dbReference>
<dbReference type="InterPro" id="IPR013842">
    <property type="entry name" value="LepA_CTD"/>
</dbReference>
<dbReference type="InterPro" id="IPR035654">
    <property type="entry name" value="LepA_IV"/>
</dbReference>
<dbReference type="InterPro" id="IPR027417">
    <property type="entry name" value="P-loop_NTPase"/>
</dbReference>
<dbReference type="InterPro" id="IPR005225">
    <property type="entry name" value="Small_GTP-bd"/>
</dbReference>
<dbReference type="InterPro" id="IPR000795">
    <property type="entry name" value="T_Tr_GTP-bd_dom"/>
</dbReference>
<dbReference type="InterPro" id="IPR009000">
    <property type="entry name" value="Transl_B-barrel_sf"/>
</dbReference>
<dbReference type="NCBIfam" id="TIGR01393">
    <property type="entry name" value="lepA"/>
    <property type="match status" value="1"/>
</dbReference>
<dbReference type="NCBIfam" id="TIGR00231">
    <property type="entry name" value="small_GTP"/>
    <property type="match status" value="1"/>
</dbReference>
<dbReference type="PANTHER" id="PTHR43512:SF4">
    <property type="entry name" value="TRANSLATION FACTOR GUF1 HOMOLOG, CHLOROPLASTIC"/>
    <property type="match status" value="1"/>
</dbReference>
<dbReference type="PANTHER" id="PTHR43512">
    <property type="entry name" value="TRANSLATION FACTOR GUF1-RELATED"/>
    <property type="match status" value="1"/>
</dbReference>
<dbReference type="Pfam" id="PF00679">
    <property type="entry name" value="EFG_C"/>
    <property type="match status" value="1"/>
</dbReference>
<dbReference type="Pfam" id="PF00009">
    <property type="entry name" value="GTP_EFTU"/>
    <property type="match status" value="1"/>
</dbReference>
<dbReference type="Pfam" id="PF03144">
    <property type="entry name" value="GTP_EFTU_D2"/>
    <property type="match status" value="1"/>
</dbReference>
<dbReference type="Pfam" id="PF06421">
    <property type="entry name" value="LepA_C"/>
    <property type="match status" value="1"/>
</dbReference>
<dbReference type="PRINTS" id="PR00315">
    <property type="entry name" value="ELONGATNFCT"/>
</dbReference>
<dbReference type="SMART" id="SM00838">
    <property type="entry name" value="EFG_C"/>
    <property type="match status" value="1"/>
</dbReference>
<dbReference type="SUPFAM" id="SSF54980">
    <property type="entry name" value="EF-G C-terminal domain-like"/>
    <property type="match status" value="2"/>
</dbReference>
<dbReference type="SUPFAM" id="SSF52540">
    <property type="entry name" value="P-loop containing nucleoside triphosphate hydrolases"/>
    <property type="match status" value="1"/>
</dbReference>
<dbReference type="SUPFAM" id="SSF50447">
    <property type="entry name" value="Translation proteins"/>
    <property type="match status" value="1"/>
</dbReference>
<dbReference type="PROSITE" id="PS00301">
    <property type="entry name" value="G_TR_1"/>
    <property type="match status" value="1"/>
</dbReference>
<dbReference type="PROSITE" id="PS51722">
    <property type="entry name" value="G_TR_2"/>
    <property type="match status" value="1"/>
</dbReference>
<evidence type="ECO:0000255" key="1">
    <source>
        <dbReference type="HAMAP-Rule" id="MF_00071"/>
    </source>
</evidence>
<proteinExistence type="inferred from homology"/>
<name>LEPA_SHEB5</name>
<comment type="function">
    <text evidence="1">Required for accurate and efficient protein synthesis under certain stress conditions. May act as a fidelity factor of the translation reaction, by catalyzing a one-codon backward translocation of tRNAs on improperly translocated ribosomes. Back-translocation proceeds from a post-translocation (POST) complex to a pre-translocation (PRE) complex, thus giving elongation factor G a second chance to translocate the tRNAs correctly. Binds to ribosomes in a GTP-dependent manner.</text>
</comment>
<comment type="catalytic activity">
    <reaction evidence="1">
        <text>GTP + H2O = GDP + phosphate + H(+)</text>
        <dbReference type="Rhea" id="RHEA:19669"/>
        <dbReference type="ChEBI" id="CHEBI:15377"/>
        <dbReference type="ChEBI" id="CHEBI:15378"/>
        <dbReference type="ChEBI" id="CHEBI:37565"/>
        <dbReference type="ChEBI" id="CHEBI:43474"/>
        <dbReference type="ChEBI" id="CHEBI:58189"/>
        <dbReference type="EC" id="3.6.5.n1"/>
    </reaction>
</comment>
<comment type="subcellular location">
    <subcellularLocation>
        <location evidence="1">Cell inner membrane</location>
        <topology evidence="1">Peripheral membrane protein</topology>
        <orientation evidence="1">Cytoplasmic side</orientation>
    </subcellularLocation>
</comment>
<comment type="similarity">
    <text evidence="1">Belongs to the TRAFAC class translation factor GTPase superfamily. Classic translation factor GTPase family. LepA subfamily.</text>
</comment>
<accession>A3D1V4</accession>
<organism>
    <name type="scientific">Shewanella baltica (strain OS155 / ATCC BAA-1091)</name>
    <dbReference type="NCBI Taxonomy" id="325240"/>
    <lineage>
        <taxon>Bacteria</taxon>
        <taxon>Pseudomonadati</taxon>
        <taxon>Pseudomonadota</taxon>
        <taxon>Gammaproteobacteria</taxon>
        <taxon>Alteromonadales</taxon>
        <taxon>Shewanellaceae</taxon>
        <taxon>Shewanella</taxon>
    </lineage>
</organism>
<protein>
    <recommendedName>
        <fullName evidence="1">Elongation factor 4</fullName>
        <shortName evidence="1">EF-4</shortName>
        <ecNumber evidence="1">3.6.5.n1</ecNumber>
    </recommendedName>
    <alternativeName>
        <fullName evidence="1">Ribosomal back-translocase LepA</fullName>
    </alternativeName>
</protein>
<reference key="1">
    <citation type="submission" date="2007-02" db="EMBL/GenBank/DDBJ databases">
        <title>Complete sequence of chromosome of Shewanella baltica OS155.</title>
        <authorList>
            <consortium name="US DOE Joint Genome Institute"/>
            <person name="Copeland A."/>
            <person name="Lucas S."/>
            <person name="Lapidus A."/>
            <person name="Barry K."/>
            <person name="Detter J.C."/>
            <person name="Glavina del Rio T."/>
            <person name="Hammon N."/>
            <person name="Israni S."/>
            <person name="Dalin E."/>
            <person name="Tice H."/>
            <person name="Pitluck S."/>
            <person name="Sims D.R."/>
            <person name="Brettin T."/>
            <person name="Bruce D."/>
            <person name="Han C."/>
            <person name="Tapia R."/>
            <person name="Brainard J."/>
            <person name="Schmutz J."/>
            <person name="Larimer F."/>
            <person name="Land M."/>
            <person name="Hauser L."/>
            <person name="Kyrpides N."/>
            <person name="Mikhailova N."/>
            <person name="Brettar I."/>
            <person name="Klappenbach J."/>
            <person name="Konstantinidis K."/>
            <person name="Rodrigues J."/>
            <person name="Tiedje J."/>
            <person name="Richardson P."/>
        </authorList>
    </citation>
    <scope>NUCLEOTIDE SEQUENCE [LARGE SCALE GENOMIC DNA]</scope>
    <source>
        <strain>OS155 / ATCC BAA-1091</strain>
    </source>
</reference>